<proteinExistence type="inferred from homology"/>
<feature type="chain" id="PRO_0000057468" description="tRNA pseudouridine synthase A">
    <location>
        <begin position="1"/>
        <end position="248"/>
    </location>
</feature>
<feature type="active site" description="Nucleophile" evidence="1">
    <location>
        <position position="53"/>
    </location>
</feature>
<feature type="binding site" evidence="1">
    <location>
        <position position="111"/>
    </location>
    <ligand>
        <name>substrate</name>
    </ligand>
</feature>
<reference key="1">
    <citation type="journal article" date="2004" name="Nat. Biotechnol.">
        <title>Complete sequence and comparative genome analysis of the dairy bacterium Streptococcus thermophilus.</title>
        <authorList>
            <person name="Bolotin A."/>
            <person name="Quinquis B."/>
            <person name="Renault P."/>
            <person name="Sorokin A."/>
            <person name="Ehrlich S.D."/>
            <person name="Kulakauskas S."/>
            <person name="Lapidus A."/>
            <person name="Goltsman E."/>
            <person name="Mazur M."/>
            <person name="Pusch G.D."/>
            <person name="Fonstein M."/>
            <person name="Overbeek R."/>
            <person name="Kyprides N."/>
            <person name="Purnelle B."/>
            <person name="Prozzi D."/>
            <person name="Ngui K."/>
            <person name="Masuy D."/>
            <person name="Hancy F."/>
            <person name="Burteau S."/>
            <person name="Boutry M."/>
            <person name="Delcour J."/>
            <person name="Goffeau A."/>
            <person name="Hols P."/>
        </authorList>
    </citation>
    <scope>NUCLEOTIDE SEQUENCE [LARGE SCALE GENOMIC DNA]</scope>
    <source>
        <strain>CNRZ 1066</strain>
    </source>
</reference>
<comment type="function">
    <text evidence="1">Formation of pseudouridine at positions 38, 39 and 40 in the anticodon stem and loop of transfer RNAs.</text>
</comment>
<comment type="catalytic activity">
    <reaction evidence="1">
        <text>uridine(38/39/40) in tRNA = pseudouridine(38/39/40) in tRNA</text>
        <dbReference type="Rhea" id="RHEA:22376"/>
        <dbReference type="Rhea" id="RHEA-COMP:10085"/>
        <dbReference type="Rhea" id="RHEA-COMP:10087"/>
        <dbReference type="ChEBI" id="CHEBI:65314"/>
        <dbReference type="ChEBI" id="CHEBI:65315"/>
        <dbReference type="EC" id="5.4.99.12"/>
    </reaction>
</comment>
<comment type="subunit">
    <text evidence="1">Homodimer.</text>
</comment>
<comment type="similarity">
    <text evidence="1">Belongs to the tRNA pseudouridine synthase TruA family.</text>
</comment>
<name>TRUA_STRT1</name>
<organism>
    <name type="scientific">Streptococcus thermophilus (strain CNRZ 1066)</name>
    <dbReference type="NCBI Taxonomy" id="299768"/>
    <lineage>
        <taxon>Bacteria</taxon>
        <taxon>Bacillati</taxon>
        <taxon>Bacillota</taxon>
        <taxon>Bacilli</taxon>
        <taxon>Lactobacillales</taxon>
        <taxon>Streptococcaceae</taxon>
        <taxon>Streptococcus</taxon>
    </lineage>
</organism>
<evidence type="ECO:0000255" key="1">
    <source>
        <dbReference type="HAMAP-Rule" id="MF_00171"/>
    </source>
</evidence>
<dbReference type="EC" id="5.4.99.12" evidence="1"/>
<dbReference type="EMBL" id="CP000024">
    <property type="protein sequence ID" value="AAV61737.1"/>
    <property type="molecule type" value="Genomic_DNA"/>
</dbReference>
<dbReference type="RefSeq" id="WP_002946941.1">
    <property type="nucleotide sequence ID" value="NC_006449.1"/>
</dbReference>
<dbReference type="SMR" id="Q5M1T6"/>
<dbReference type="GeneID" id="66898047"/>
<dbReference type="KEGG" id="stc:str0122"/>
<dbReference type="HOGENOM" id="CLU_014673_0_1_9"/>
<dbReference type="GO" id="GO:0003723">
    <property type="term" value="F:RNA binding"/>
    <property type="evidence" value="ECO:0007669"/>
    <property type="project" value="InterPro"/>
</dbReference>
<dbReference type="GO" id="GO:0160147">
    <property type="term" value="F:tRNA pseudouridine(38-40) synthase activity"/>
    <property type="evidence" value="ECO:0007669"/>
    <property type="project" value="UniProtKB-EC"/>
</dbReference>
<dbReference type="GO" id="GO:0031119">
    <property type="term" value="P:tRNA pseudouridine synthesis"/>
    <property type="evidence" value="ECO:0007669"/>
    <property type="project" value="UniProtKB-UniRule"/>
</dbReference>
<dbReference type="CDD" id="cd02570">
    <property type="entry name" value="PseudoU_synth_EcTruA"/>
    <property type="match status" value="1"/>
</dbReference>
<dbReference type="FunFam" id="3.30.70.580:FF:000001">
    <property type="entry name" value="tRNA pseudouridine synthase A"/>
    <property type="match status" value="1"/>
</dbReference>
<dbReference type="Gene3D" id="3.30.70.660">
    <property type="entry name" value="Pseudouridine synthase I, catalytic domain, C-terminal subdomain"/>
    <property type="match status" value="1"/>
</dbReference>
<dbReference type="Gene3D" id="3.30.70.580">
    <property type="entry name" value="Pseudouridine synthase I, catalytic domain, N-terminal subdomain"/>
    <property type="match status" value="1"/>
</dbReference>
<dbReference type="HAMAP" id="MF_00171">
    <property type="entry name" value="TruA"/>
    <property type="match status" value="1"/>
</dbReference>
<dbReference type="InterPro" id="IPR020103">
    <property type="entry name" value="PsdUridine_synth_cat_dom_sf"/>
</dbReference>
<dbReference type="InterPro" id="IPR001406">
    <property type="entry name" value="PsdUridine_synth_TruA"/>
</dbReference>
<dbReference type="InterPro" id="IPR020097">
    <property type="entry name" value="PsdUridine_synth_TruA_a/b_dom"/>
</dbReference>
<dbReference type="InterPro" id="IPR020095">
    <property type="entry name" value="PsdUridine_synth_TruA_C"/>
</dbReference>
<dbReference type="InterPro" id="IPR020094">
    <property type="entry name" value="TruA/RsuA/RluB/E/F_N"/>
</dbReference>
<dbReference type="NCBIfam" id="TIGR00071">
    <property type="entry name" value="hisT_truA"/>
    <property type="match status" value="1"/>
</dbReference>
<dbReference type="PANTHER" id="PTHR11142">
    <property type="entry name" value="PSEUDOURIDYLATE SYNTHASE"/>
    <property type="match status" value="1"/>
</dbReference>
<dbReference type="PANTHER" id="PTHR11142:SF0">
    <property type="entry name" value="TRNA PSEUDOURIDINE SYNTHASE-LIKE 1"/>
    <property type="match status" value="1"/>
</dbReference>
<dbReference type="Pfam" id="PF01416">
    <property type="entry name" value="PseudoU_synth_1"/>
    <property type="match status" value="2"/>
</dbReference>
<dbReference type="PIRSF" id="PIRSF001430">
    <property type="entry name" value="tRNA_psdUrid_synth"/>
    <property type="match status" value="1"/>
</dbReference>
<dbReference type="SUPFAM" id="SSF55120">
    <property type="entry name" value="Pseudouridine synthase"/>
    <property type="match status" value="1"/>
</dbReference>
<accession>Q5M1T6</accession>
<gene>
    <name evidence="1" type="primary">truA</name>
    <name type="ordered locus">str0122</name>
</gene>
<keyword id="KW-0413">Isomerase</keyword>
<keyword id="KW-0819">tRNA processing</keyword>
<protein>
    <recommendedName>
        <fullName evidence="1">tRNA pseudouridine synthase A</fullName>
        <ecNumber evidence="1">5.4.99.12</ecNumber>
    </recommendedName>
    <alternativeName>
        <fullName evidence="1">tRNA pseudouridine(38-40) synthase</fullName>
    </alternativeName>
    <alternativeName>
        <fullName evidence="1">tRNA pseudouridylate synthase I</fullName>
    </alternativeName>
    <alternativeName>
        <fullName evidence="1">tRNA-uridine isomerase I</fullName>
    </alternativeName>
</protein>
<sequence>MVRYKATISYDGTLFSGFQRQPNARSIQEEIEKTLLRLNSGTPVTVHGAGRTDAGVHAYGQVIHFDLPQERDPEKLRFGLDTQCPDDIDIVSIELVSEEFHARYSKHIKTYEFLVDAGRPKNPMMRNYAIHYPYPLSLALMQEAAMELVGTHDFTGFTASGTSVENKVRTITQASVSIDEKTGFYVFAFSGNGFLYKQVRNMVGTLLKIGNGRMPVSQVKTVLESRDRNLAGPTVAGNGLYLKEIRYE</sequence>